<accession>B2ICU3</accession>
<gene>
    <name evidence="1" type="primary">groES</name>
    <name evidence="1" type="synonym">groS</name>
    <name type="ordered locus">Bind_1737</name>
</gene>
<proteinExistence type="inferred from homology"/>
<evidence type="ECO:0000255" key="1">
    <source>
        <dbReference type="HAMAP-Rule" id="MF_00580"/>
    </source>
</evidence>
<reference key="1">
    <citation type="journal article" date="2010" name="J. Bacteriol.">
        <title>Complete genome sequence of Beijerinckia indica subsp. indica.</title>
        <authorList>
            <person name="Tamas I."/>
            <person name="Dedysh S.N."/>
            <person name="Liesack W."/>
            <person name="Stott M.B."/>
            <person name="Alam M."/>
            <person name="Murrell J.C."/>
            <person name="Dunfield P.F."/>
        </authorList>
    </citation>
    <scope>NUCLEOTIDE SEQUENCE [LARGE SCALE GENOMIC DNA]</scope>
    <source>
        <strain>ATCC 9039 / DSM 1715 / NCIMB 8712</strain>
    </source>
</reference>
<protein>
    <recommendedName>
        <fullName evidence="1">Co-chaperonin GroES</fullName>
    </recommendedName>
    <alternativeName>
        <fullName evidence="1">10 kDa chaperonin</fullName>
    </alternativeName>
    <alternativeName>
        <fullName evidence="1">Chaperonin-10</fullName>
        <shortName evidence="1">Cpn10</shortName>
    </alternativeName>
</protein>
<feature type="chain" id="PRO_1000129627" description="Co-chaperonin GroES">
    <location>
        <begin position="1"/>
        <end position="95"/>
    </location>
</feature>
<sequence>MTFRPLHDRVVVKRLESEEKTKGGIIIPDSAKEKPQEGEIIAVGPGGRDESGKLIPLDVKAGDKILFGKWSGTEVKIDGQDLLIMKESDILGVVG</sequence>
<comment type="function">
    <text evidence="1">Together with the chaperonin GroEL, plays an essential role in assisting protein folding. The GroEL-GroES system forms a nano-cage that allows encapsulation of the non-native substrate proteins and provides a physical environment optimized to promote and accelerate protein folding. GroES binds to the apical surface of the GroEL ring, thereby capping the opening of the GroEL channel.</text>
</comment>
<comment type="subunit">
    <text evidence="1">Heptamer of 7 subunits arranged in a ring. Interacts with the chaperonin GroEL.</text>
</comment>
<comment type="subcellular location">
    <subcellularLocation>
        <location evidence="1">Cytoplasm</location>
    </subcellularLocation>
</comment>
<comment type="similarity">
    <text evidence="1">Belongs to the GroES chaperonin family.</text>
</comment>
<dbReference type="EMBL" id="CP001016">
    <property type="protein sequence ID" value="ACB95367.1"/>
    <property type="molecule type" value="Genomic_DNA"/>
</dbReference>
<dbReference type="RefSeq" id="WP_012384724.1">
    <property type="nucleotide sequence ID" value="NC_010581.1"/>
</dbReference>
<dbReference type="SMR" id="B2ICU3"/>
<dbReference type="STRING" id="395963.Bind_1737"/>
<dbReference type="KEGG" id="bid:Bind_1737"/>
<dbReference type="eggNOG" id="COG0234">
    <property type="taxonomic scope" value="Bacteria"/>
</dbReference>
<dbReference type="HOGENOM" id="CLU_132825_1_0_5"/>
<dbReference type="OrthoDB" id="9806791at2"/>
<dbReference type="Proteomes" id="UP000001695">
    <property type="component" value="Chromosome"/>
</dbReference>
<dbReference type="GO" id="GO:0005737">
    <property type="term" value="C:cytoplasm"/>
    <property type="evidence" value="ECO:0007669"/>
    <property type="project" value="UniProtKB-SubCell"/>
</dbReference>
<dbReference type="GO" id="GO:0005524">
    <property type="term" value="F:ATP binding"/>
    <property type="evidence" value="ECO:0007669"/>
    <property type="project" value="InterPro"/>
</dbReference>
<dbReference type="GO" id="GO:0046872">
    <property type="term" value="F:metal ion binding"/>
    <property type="evidence" value="ECO:0007669"/>
    <property type="project" value="TreeGrafter"/>
</dbReference>
<dbReference type="GO" id="GO:0044183">
    <property type="term" value="F:protein folding chaperone"/>
    <property type="evidence" value="ECO:0007669"/>
    <property type="project" value="InterPro"/>
</dbReference>
<dbReference type="GO" id="GO:0051087">
    <property type="term" value="F:protein-folding chaperone binding"/>
    <property type="evidence" value="ECO:0007669"/>
    <property type="project" value="TreeGrafter"/>
</dbReference>
<dbReference type="GO" id="GO:0051082">
    <property type="term" value="F:unfolded protein binding"/>
    <property type="evidence" value="ECO:0007669"/>
    <property type="project" value="TreeGrafter"/>
</dbReference>
<dbReference type="GO" id="GO:0051085">
    <property type="term" value="P:chaperone cofactor-dependent protein refolding"/>
    <property type="evidence" value="ECO:0007669"/>
    <property type="project" value="TreeGrafter"/>
</dbReference>
<dbReference type="CDD" id="cd00320">
    <property type="entry name" value="cpn10"/>
    <property type="match status" value="1"/>
</dbReference>
<dbReference type="FunFam" id="2.30.33.40:FF:000001">
    <property type="entry name" value="10 kDa chaperonin"/>
    <property type="match status" value="1"/>
</dbReference>
<dbReference type="Gene3D" id="2.30.33.40">
    <property type="entry name" value="GroES chaperonin"/>
    <property type="match status" value="1"/>
</dbReference>
<dbReference type="HAMAP" id="MF_00580">
    <property type="entry name" value="CH10"/>
    <property type="match status" value="1"/>
</dbReference>
<dbReference type="InterPro" id="IPR020818">
    <property type="entry name" value="Chaperonin_GroES"/>
</dbReference>
<dbReference type="InterPro" id="IPR037124">
    <property type="entry name" value="Chaperonin_GroES_sf"/>
</dbReference>
<dbReference type="InterPro" id="IPR018369">
    <property type="entry name" value="Chaprnonin_Cpn10_CS"/>
</dbReference>
<dbReference type="InterPro" id="IPR011032">
    <property type="entry name" value="GroES-like_sf"/>
</dbReference>
<dbReference type="NCBIfam" id="NF001527">
    <property type="entry name" value="PRK00364.1-2"/>
    <property type="match status" value="1"/>
</dbReference>
<dbReference type="NCBIfam" id="NF001529">
    <property type="entry name" value="PRK00364.1-5"/>
    <property type="match status" value="1"/>
</dbReference>
<dbReference type="NCBIfam" id="NF001531">
    <property type="entry name" value="PRK00364.2-2"/>
    <property type="match status" value="1"/>
</dbReference>
<dbReference type="NCBIfam" id="NF001533">
    <property type="entry name" value="PRK00364.2-4"/>
    <property type="match status" value="1"/>
</dbReference>
<dbReference type="NCBIfam" id="NF001534">
    <property type="entry name" value="PRK00364.2-5"/>
    <property type="match status" value="1"/>
</dbReference>
<dbReference type="PANTHER" id="PTHR10772">
    <property type="entry name" value="10 KDA HEAT SHOCK PROTEIN"/>
    <property type="match status" value="1"/>
</dbReference>
<dbReference type="PANTHER" id="PTHR10772:SF58">
    <property type="entry name" value="CO-CHAPERONIN GROES"/>
    <property type="match status" value="1"/>
</dbReference>
<dbReference type="Pfam" id="PF00166">
    <property type="entry name" value="Cpn10"/>
    <property type="match status" value="1"/>
</dbReference>
<dbReference type="PRINTS" id="PR00297">
    <property type="entry name" value="CHAPERONIN10"/>
</dbReference>
<dbReference type="SMART" id="SM00883">
    <property type="entry name" value="Cpn10"/>
    <property type="match status" value="1"/>
</dbReference>
<dbReference type="SUPFAM" id="SSF50129">
    <property type="entry name" value="GroES-like"/>
    <property type="match status" value="1"/>
</dbReference>
<dbReference type="PROSITE" id="PS00681">
    <property type="entry name" value="CHAPERONINS_CPN10"/>
    <property type="match status" value="1"/>
</dbReference>
<organism>
    <name type="scientific">Beijerinckia indica subsp. indica (strain ATCC 9039 / DSM 1715 / NCIMB 8712)</name>
    <dbReference type="NCBI Taxonomy" id="395963"/>
    <lineage>
        <taxon>Bacteria</taxon>
        <taxon>Pseudomonadati</taxon>
        <taxon>Pseudomonadota</taxon>
        <taxon>Alphaproteobacteria</taxon>
        <taxon>Hyphomicrobiales</taxon>
        <taxon>Beijerinckiaceae</taxon>
        <taxon>Beijerinckia</taxon>
    </lineage>
</organism>
<keyword id="KW-0143">Chaperone</keyword>
<keyword id="KW-0963">Cytoplasm</keyword>
<keyword id="KW-1185">Reference proteome</keyword>
<name>CH10_BEII9</name>